<accession>Q81IA1</accession>
<protein>
    <recommendedName>
        <fullName evidence="1">Processive diacylglycerol beta-glucosyltransferase</fullName>
        <ecNumber>2.4.1.315</ecNumber>
    </recommendedName>
    <alternativeName>
        <fullName evidence="1">Beta-diglucosyldiacylglycerol synthase</fullName>
        <shortName evidence="1">Beta-DGS</shortName>
        <shortName evidence="1">DGlcDAG synthase</shortName>
        <shortName evidence="1">Glc2-DAG synthase</shortName>
    </alternativeName>
    <alternativeName>
        <fullName evidence="1">Beta-gentiobiosyldiacylglycerol synthase</fullName>
    </alternativeName>
    <alternativeName>
        <fullName evidence="1">Beta-monoglucosyldiacylglycerol synthase</fullName>
        <shortName evidence="1">Beta-MGS</shortName>
        <shortName evidence="1">MGlcDAG synthase</shortName>
    </alternativeName>
    <alternativeName>
        <fullName evidence="1">Beta-triglucosyldiacylglycerol synthase</fullName>
        <shortName evidence="1">TGlcDAG synthase</shortName>
    </alternativeName>
    <alternativeName>
        <fullName>Diglucosyl diacylglycerol synthase (1,6-linking)</fullName>
    </alternativeName>
    <alternativeName>
        <fullName evidence="1">Glucosyl-beta-1,6-glucosyldiacylglycerol synthase</fullName>
    </alternativeName>
    <alternativeName>
        <fullName evidence="1">UDP glucosyltransferase</fullName>
    </alternativeName>
    <alternativeName>
        <fullName evidence="1">UDP-glucose:1,2-diacylglycerol-3-beta-D-glucosyltransferase</fullName>
    </alternativeName>
</protein>
<proteinExistence type="inferred from homology"/>
<keyword id="KW-0119">Carbohydrate metabolism</keyword>
<keyword id="KW-1003">Cell membrane</keyword>
<keyword id="KW-0328">Glycosyltransferase</keyword>
<keyword id="KW-0444">Lipid biosynthesis</keyword>
<keyword id="KW-0443">Lipid metabolism</keyword>
<keyword id="KW-0472">Membrane</keyword>
<keyword id="KW-1185">Reference proteome</keyword>
<keyword id="KW-0808">Transferase</keyword>
<sequence>MIKNPKVLILTAHYGNGHVQVAKTLEQTFRQKGIEDVIVCDLFGESHPFITDITKYLYLKSYTIGKELYRLFYYGVEKIYDKKIASWYANFGRKRLKTLLQVEKPDIVINTFPIIAVPELKKQTGISIPVYNVLTDFCVHKIWIHREVDRYFVATDHVKELMVDIGVPAEQIVETGIPIRSSFELKVNPEIIYTKYQLCKNKKILLIVAGAHGVLGNVKELCQSFMSVPNLQVVVVCGKNEALKQDLLSLQKQNSDALKVFGYVENIDELFRVTSCMITKPGGITLSEAAALQVPVILYKPVPGQENENAMYFERKGAAVVIRDDSEVFAKTEALLQDDVKLLQMKEAMKSIYLPEPAGHIVDAILAENHAEPRHIPIKSPALAQSFT</sequence>
<feature type="chain" id="PRO_0000308449" description="Processive diacylglycerol beta-glucosyltransferase">
    <location>
        <begin position="1"/>
        <end position="388"/>
    </location>
</feature>
<name>UGTP_BACCR</name>
<comment type="function">
    <text evidence="1">Processive glucosyltransferase involved in the biosynthesis of both the bilayer- and non-bilayer-forming membrane glucolipids. Is able to successively transfer up to three glucosyl residues to diacylglycerol (DAG), thereby catalyzing the formation of beta-monoglucosyl-DAG (3-O-(beta-D-glucopyranosyl)-1,2-diacyl-sn-glycerol), beta-diglucosyl-DAG (3-O-(beta-D-glucopyranosyl-beta-(1-&gt;6)-D-glucopyranosyl)-1,2-diacyl-sn-glycerol) and beta-triglucosyl-DAG (3-O-(beta-D-glucopyranosyl-beta-(1-&gt;6)-D-glucopyranosyl-beta-(1-&gt;6)-D-glucopyranosyl)-1,2-diacyl-sn-glycerol). Beta-diglucosyl-DAG is the predominant glycolipid found in Bacillales and is also used as a membrane anchor for lipoteichoic acid (LTA).</text>
</comment>
<comment type="catalytic activity">
    <reaction>
        <text>a 1,2-diacyl-3-O-(beta-D-glucopyranosyl)-sn-glycerol + UDP-alpha-D-glucose = a 1,2-diacyl-3-O-(beta-D-Glc-(1-&gt;6)-beta-D-Glc)-sn-glycerol + UDP + H(+)</text>
        <dbReference type="Rhea" id="RHEA:39031"/>
        <dbReference type="ChEBI" id="CHEBI:15378"/>
        <dbReference type="ChEBI" id="CHEBI:58223"/>
        <dbReference type="ChEBI" id="CHEBI:58885"/>
        <dbReference type="ChEBI" id="CHEBI:75799"/>
        <dbReference type="ChEBI" id="CHEBI:76264"/>
        <dbReference type="EC" id="2.4.1.315"/>
    </reaction>
</comment>
<comment type="catalytic activity">
    <reaction>
        <text>a 1,2-diacyl-3-O-(beta-D-Glc-(1-&gt;6)-beta-D-Glc)-sn-glycerol + UDP-alpha-D-glucose = a 1,2-diacyl-3-O-(beta-D-Glc-(1-&gt;6)-beta-D-Glc-(1-&gt;6)-beta-D-Glc)-sn-glycerol + UDP + H(+)</text>
        <dbReference type="Rhea" id="RHEA:39027"/>
        <dbReference type="ChEBI" id="CHEBI:15378"/>
        <dbReference type="ChEBI" id="CHEBI:58223"/>
        <dbReference type="ChEBI" id="CHEBI:58885"/>
        <dbReference type="ChEBI" id="CHEBI:76264"/>
        <dbReference type="ChEBI" id="CHEBI:76265"/>
        <dbReference type="EC" id="2.4.1.315"/>
    </reaction>
</comment>
<comment type="catalytic activity">
    <reaction evidence="1">
        <text>a 1,2-diacyl-sn-glycerol + UDP-alpha-D-glucose = a 1,2-diacyl-3-O-(beta-D-glucopyranosyl)-sn-glycerol + UDP + H(+)</text>
        <dbReference type="Rhea" id="RHEA:17285"/>
        <dbReference type="ChEBI" id="CHEBI:15378"/>
        <dbReference type="ChEBI" id="CHEBI:17815"/>
        <dbReference type="ChEBI" id="CHEBI:58223"/>
        <dbReference type="ChEBI" id="CHEBI:58885"/>
        <dbReference type="ChEBI" id="CHEBI:75799"/>
    </reaction>
</comment>
<comment type="pathway">
    <text evidence="1">Glycolipid metabolism; diglucosyl-diacylglycerol biosynthesis.</text>
</comment>
<comment type="subcellular location">
    <subcellularLocation>
        <location evidence="1">Cell membrane</location>
    </subcellularLocation>
</comment>
<comment type="similarity">
    <text evidence="1">Belongs to the glycosyltransferase 28 family. UgtP subfamily.</text>
</comment>
<evidence type="ECO:0000255" key="1">
    <source>
        <dbReference type="HAMAP-Rule" id="MF_01280"/>
    </source>
</evidence>
<organism>
    <name type="scientific">Bacillus cereus (strain ATCC 14579 / DSM 31 / CCUG 7414 / JCM 2152 / NBRC 15305 / NCIMB 9373 / NCTC 2599 / NRRL B-3711)</name>
    <dbReference type="NCBI Taxonomy" id="226900"/>
    <lineage>
        <taxon>Bacteria</taxon>
        <taxon>Bacillati</taxon>
        <taxon>Bacillota</taxon>
        <taxon>Bacilli</taxon>
        <taxon>Bacillales</taxon>
        <taxon>Bacillaceae</taxon>
        <taxon>Bacillus</taxon>
        <taxon>Bacillus cereus group</taxon>
    </lineage>
</organism>
<dbReference type="EC" id="2.4.1.315"/>
<dbReference type="EMBL" id="AE016877">
    <property type="protein sequence ID" value="AAP07531.1"/>
    <property type="molecule type" value="Genomic_DNA"/>
</dbReference>
<dbReference type="RefSeq" id="NP_830330.1">
    <property type="nucleotide sequence ID" value="NC_004722.1"/>
</dbReference>
<dbReference type="RefSeq" id="WP_000594691.1">
    <property type="nucleotide sequence ID" value="NZ_CP138336.1"/>
</dbReference>
<dbReference type="SMR" id="Q81IA1"/>
<dbReference type="STRING" id="226900.BC_0493"/>
<dbReference type="CAZy" id="GT28">
    <property type="family name" value="Glycosyltransferase Family 28"/>
</dbReference>
<dbReference type="KEGG" id="bce:BC0493"/>
<dbReference type="PATRIC" id="fig|226900.8.peg.465"/>
<dbReference type="HOGENOM" id="CLU_028367_0_1_9"/>
<dbReference type="OrthoDB" id="9815663at2"/>
<dbReference type="UniPathway" id="UPA00894"/>
<dbReference type="Proteomes" id="UP000001417">
    <property type="component" value="Chromosome"/>
</dbReference>
<dbReference type="GO" id="GO:0005886">
    <property type="term" value="C:plasma membrane"/>
    <property type="evidence" value="ECO:0007669"/>
    <property type="project" value="UniProtKB-SubCell"/>
</dbReference>
<dbReference type="GO" id="GO:0047228">
    <property type="term" value="F:1,2-diacylglycerol 3-glucosyltransferase activity"/>
    <property type="evidence" value="ECO:0007669"/>
    <property type="project" value="UniProtKB-UniRule"/>
</dbReference>
<dbReference type="GO" id="GO:0009246">
    <property type="term" value="P:enterobacterial common antigen biosynthetic process"/>
    <property type="evidence" value="ECO:0007669"/>
    <property type="project" value="UniProtKB-UniPathway"/>
</dbReference>
<dbReference type="GO" id="GO:0009247">
    <property type="term" value="P:glycolipid biosynthetic process"/>
    <property type="evidence" value="ECO:0007669"/>
    <property type="project" value="UniProtKB-UniRule"/>
</dbReference>
<dbReference type="GO" id="GO:0070395">
    <property type="term" value="P:lipoteichoic acid biosynthetic process"/>
    <property type="evidence" value="ECO:0007669"/>
    <property type="project" value="UniProtKB-UniRule"/>
</dbReference>
<dbReference type="CDD" id="cd17507">
    <property type="entry name" value="GT28_Beta-DGS-like"/>
    <property type="match status" value="1"/>
</dbReference>
<dbReference type="Gene3D" id="3.40.50.2000">
    <property type="entry name" value="Glycogen Phosphorylase B"/>
    <property type="match status" value="1"/>
</dbReference>
<dbReference type="HAMAP" id="MF_01280">
    <property type="entry name" value="Diacylglyc_glucosyltr"/>
    <property type="match status" value="1"/>
</dbReference>
<dbReference type="InterPro" id="IPR009695">
    <property type="entry name" value="Diacylglyc_glucosyltr_N"/>
</dbReference>
<dbReference type="InterPro" id="IPR007235">
    <property type="entry name" value="Glyco_trans_28_C"/>
</dbReference>
<dbReference type="InterPro" id="IPR050519">
    <property type="entry name" value="Glycosyltransf_28_UgtP"/>
</dbReference>
<dbReference type="InterPro" id="IPR023589">
    <property type="entry name" value="Pro_diacylglycrl_glcsylTrfase"/>
</dbReference>
<dbReference type="NCBIfam" id="NF010135">
    <property type="entry name" value="PRK13609.1"/>
    <property type="match status" value="1"/>
</dbReference>
<dbReference type="PANTHER" id="PTHR43025">
    <property type="entry name" value="MONOGALACTOSYLDIACYLGLYCEROL SYNTHASE"/>
    <property type="match status" value="1"/>
</dbReference>
<dbReference type="PANTHER" id="PTHR43025:SF3">
    <property type="entry name" value="MONOGALACTOSYLDIACYLGLYCEROL SYNTHASE 1, CHLOROPLASTIC"/>
    <property type="match status" value="1"/>
</dbReference>
<dbReference type="Pfam" id="PF04101">
    <property type="entry name" value="Glyco_tran_28_C"/>
    <property type="match status" value="1"/>
</dbReference>
<dbReference type="Pfam" id="PF06925">
    <property type="entry name" value="MGDG_synth"/>
    <property type="match status" value="1"/>
</dbReference>
<dbReference type="SUPFAM" id="SSF53756">
    <property type="entry name" value="UDP-Glycosyltransferase/glycogen phosphorylase"/>
    <property type="match status" value="1"/>
</dbReference>
<reference key="1">
    <citation type="journal article" date="2003" name="Nature">
        <title>Genome sequence of Bacillus cereus and comparative analysis with Bacillus anthracis.</title>
        <authorList>
            <person name="Ivanova N."/>
            <person name="Sorokin A."/>
            <person name="Anderson I."/>
            <person name="Galleron N."/>
            <person name="Candelon B."/>
            <person name="Kapatral V."/>
            <person name="Bhattacharyya A."/>
            <person name="Reznik G."/>
            <person name="Mikhailova N."/>
            <person name="Lapidus A."/>
            <person name="Chu L."/>
            <person name="Mazur M."/>
            <person name="Goltsman E."/>
            <person name="Larsen N."/>
            <person name="D'Souza M."/>
            <person name="Walunas T."/>
            <person name="Grechkin Y."/>
            <person name="Pusch G."/>
            <person name="Haselkorn R."/>
            <person name="Fonstein M."/>
            <person name="Ehrlich S.D."/>
            <person name="Overbeek R."/>
            <person name="Kyrpides N.C."/>
        </authorList>
    </citation>
    <scope>NUCLEOTIDE SEQUENCE [LARGE SCALE GENOMIC DNA]</scope>
    <source>
        <strain>ATCC 14579 / DSM 31 / CCUG 7414 / JCM 2152 / NBRC 15305 / NCIMB 9373 / NCTC 2599 / NRRL B-3711</strain>
    </source>
</reference>
<gene>
    <name evidence="1" type="primary">ugtP</name>
    <name type="ordered locus">BC_0493</name>
</gene>